<feature type="chain" id="PRO_1000014578" description="Small ribosomal subunit protein bS20">
    <location>
        <begin position="1"/>
        <end position="88"/>
    </location>
</feature>
<feature type="region of interest" description="Disordered" evidence="2">
    <location>
        <begin position="1"/>
        <end position="25"/>
    </location>
</feature>
<feature type="compositionally biased region" description="Polar residues" evidence="2">
    <location>
        <begin position="16"/>
        <end position="25"/>
    </location>
</feature>
<dbReference type="EMBL" id="CP000513">
    <property type="protein sequence ID" value="ABQ13555.1"/>
    <property type="molecule type" value="Genomic_DNA"/>
</dbReference>
<dbReference type="RefSeq" id="WP_012031337.1">
    <property type="nucleotide sequence ID" value="NC_009446.1"/>
</dbReference>
<dbReference type="SMR" id="A5EXX2"/>
<dbReference type="STRING" id="246195.DNO_1025"/>
<dbReference type="KEGG" id="dno:DNO_1025"/>
<dbReference type="eggNOG" id="COG0268">
    <property type="taxonomic scope" value="Bacteria"/>
</dbReference>
<dbReference type="HOGENOM" id="CLU_160655_0_1_6"/>
<dbReference type="OrthoDB" id="9807974at2"/>
<dbReference type="Proteomes" id="UP000000248">
    <property type="component" value="Chromosome"/>
</dbReference>
<dbReference type="GO" id="GO:0005829">
    <property type="term" value="C:cytosol"/>
    <property type="evidence" value="ECO:0007669"/>
    <property type="project" value="TreeGrafter"/>
</dbReference>
<dbReference type="GO" id="GO:0015935">
    <property type="term" value="C:small ribosomal subunit"/>
    <property type="evidence" value="ECO:0007669"/>
    <property type="project" value="TreeGrafter"/>
</dbReference>
<dbReference type="GO" id="GO:0070181">
    <property type="term" value="F:small ribosomal subunit rRNA binding"/>
    <property type="evidence" value="ECO:0007669"/>
    <property type="project" value="TreeGrafter"/>
</dbReference>
<dbReference type="GO" id="GO:0003735">
    <property type="term" value="F:structural constituent of ribosome"/>
    <property type="evidence" value="ECO:0007669"/>
    <property type="project" value="InterPro"/>
</dbReference>
<dbReference type="GO" id="GO:0006412">
    <property type="term" value="P:translation"/>
    <property type="evidence" value="ECO:0007669"/>
    <property type="project" value="UniProtKB-UniRule"/>
</dbReference>
<dbReference type="FunFam" id="1.20.58.110:FF:000001">
    <property type="entry name" value="30S ribosomal protein S20"/>
    <property type="match status" value="1"/>
</dbReference>
<dbReference type="Gene3D" id="1.20.58.110">
    <property type="entry name" value="Ribosomal protein S20"/>
    <property type="match status" value="1"/>
</dbReference>
<dbReference type="HAMAP" id="MF_00500">
    <property type="entry name" value="Ribosomal_bS20"/>
    <property type="match status" value="1"/>
</dbReference>
<dbReference type="InterPro" id="IPR002583">
    <property type="entry name" value="Ribosomal_bS20"/>
</dbReference>
<dbReference type="InterPro" id="IPR036510">
    <property type="entry name" value="Ribosomal_bS20_sf"/>
</dbReference>
<dbReference type="NCBIfam" id="TIGR00029">
    <property type="entry name" value="S20"/>
    <property type="match status" value="1"/>
</dbReference>
<dbReference type="PANTHER" id="PTHR33398">
    <property type="entry name" value="30S RIBOSOMAL PROTEIN S20"/>
    <property type="match status" value="1"/>
</dbReference>
<dbReference type="PANTHER" id="PTHR33398:SF1">
    <property type="entry name" value="SMALL RIBOSOMAL SUBUNIT PROTEIN BS20C"/>
    <property type="match status" value="1"/>
</dbReference>
<dbReference type="Pfam" id="PF01649">
    <property type="entry name" value="Ribosomal_S20p"/>
    <property type="match status" value="1"/>
</dbReference>
<dbReference type="SUPFAM" id="SSF46992">
    <property type="entry name" value="Ribosomal protein S20"/>
    <property type="match status" value="1"/>
</dbReference>
<comment type="function">
    <text evidence="1">Binds directly to 16S ribosomal RNA.</text>
</comment>
<comment type="similarity">
    <text evidence="1">Belongs to the bacterial ribosomal protein bS20 family.</text>
</comment>
<gene>
    <name evidence="1" type="primary">rpsT</name>
    <name type="ordered locus">DNO_1025</name>
</gene>
<protein>
    <recommendedName>
        <fullName evidence="1">Small ribosomal subunit protein bS20</fullName>
    </recommendedName>
    <alternativeName>
        <fullName evidence="3">30S ribosomal protein S20</fullName>
    </alternativeName>
</protein>
<organism>
    <name type="scientific">Dichelobacter nodosus (strain VCS1703A)</name>
    <dbReference type="NCBI Taxonomy" id="246195"/>
    <lineage>
        <taxon>Bacteria</taxon>
        <taxon>Pseudomonadati</taxon>
        <taxon>Pseudomonadota</taxon>
        <taxon>Gammaproteobacteria</taxon>
        <taxon>Cardiobacteriales</taxon>
        <taxon>Cardiobacteriaceae</taxon>
        <taxon>Dichelobacter</taxon>
    </lineage>
</organism>
<reference key="1">
    <citation type="journal article" date="2007" name="Nat. Biotechnol.">
        <title>Genome sequence and identification of candidate vaccine antigens from the animal pathogen Dichelobacter nodosus.</title>
        <authorList>
            <person name="Myers G.S.A."/>
            <person name="Parker D."/>
            <person name="Al-Hasani K."/>
            <person name="Kennan R.M."/>
            <person name="Seemann T."/>
            <person name="Ren Q."/>
            <person name="Badger J.H."/>
            <person name="Selengut J.D."/>
            <person name="Deboy R.T."/>
            <person name="Tettelin H."/>
            <person name="Boyce J.D."/>
            <person name="McCarl V.P."/>
            <person name="Han X."/>
            <person name="Nelson W.C."/>
            <person name="Madupu R."/>
            <person name="Mohamoud Y."/>
            <person name="Holley T."/>
            <person name="Fedorova N."/>
            <person name="Khouri H."/>
            <person name="Bottomley S.P."/>
            <person name="Whittington R.J."/>
            <person name="Adler B."/>
            <person name="Songer J.G."/>
            <person name="Rood J.I."/>
            <person name="Paulsen I.T."/>
        </authorList>
    </citation>
    <scope>NUCLEOTIDE SEQUENCE [LARGE SCALE GENOMIC DNA]</scope>
    <source>
        <strain>VCS1703A</strain>
    </source>
</reference>
<evidence type="ECO:0000255" key="1">
    <source>
        <dbReference type="HAMAP-Rule" id="MF_00500"/>
    </source>
</evidence>
<evidence type="ECO:0000256" key="2">
    <source>
        <dbReference type="SAM" id="MobiDB-lite"/>
    </source>
</evidence>
<evidence type="ECO:0000305" key="3"/>
<proteinExistence type="inferred from homology"/>
<accession>A5EXX2</accession>
<keyword id="KW-1185">Reference proteome</keyword>
<keyword id="KW-0687">Ribonucleoprotein</keyword>
<keyword id="KW-0689">Ribosomal protein</keyword>
<keyword id="KW-0694">RNA-binding</keyword>
<keyword id="KW-0699">rRNA-binding</keyword>
<sequence>MANTAQALKRIRQTNKARAQNASQRSTIRTVMKKFLKAIEAKDIATAEQEFSTAASLLDRAAQKHIIHKNKASRLKSRMHAKKKALVA</sequence>
<name>RS20_DICNV</name>